<sequence>MARLSYVRIKYLFFSWLAVFIGSWVIYVRYNSYTELCRGQECKTAICDKYRKGIIDGSACEGLCEKETIYFGKCLSAKPNNQIYLGIWGNLEGVIKCQMENTLHLDFGVDLEPRKEIVLFDKPTRGTTVQKFKEMVHSLVKKRLGDQGNLQDLVNLILKAADSNKDGHVSLPEAKSAWALLQLNEFLLMVILQDKEHTPKLLGYCGDLYITERVPYTSLYGISLPWIIEVFIPMGLRKRMDQWFTPSWPRKAKIVIGLLEFVEDIFHGLYGNFLMCDVSAKNFGYNDKYDLKMVDMRKIIPEMSLKEYIKYKSCESDSDCVYGADCGTTCDQSKRCTTDVTQPNLAKVCLLVKDYLLSGTPSEIRDELEKQIYSCIALKAATKHMEMEHALILNNLKALLWKKISHTNDS</sequence>
<accession>Q6DCL6</accession>
<evidence type="ECO:0000250" key="1"/>
<evidence type="ECO:0000250" key="2">
    <source>
        <dbReference type="UniProtKB" id="Q9D6I7"/>
    </source>
</evidence>
<evidence type="ECO:0000255" key="3"/>
<evidence type="ECO:0000305" key="4"/>
<reference key="1">
    <citation type="submission" date="2004-07" db="EMBL/GenBank/DDBJ databases">
        <authorList>
            <consortium name="NIH - Xenopus Gene Collection (XGC) project"/>
        </authorList>
    </citation>
    <scope>NUCLEOTIDE SEQUENCE [LARGE SCALE MRNA]</scope>
    <source>
        <tissue>Embryo</tissue>
    </source>
</reference>
<proteinExistence type="evidence at transcript level"/>
<name>DIK1A_XENLA</name>
<dbReference type="EMBL" id="BC077992">
    <property type="protein sequence ID" value="AAH77992.1"/>
    <property type="molecule type" value="mRNA"/>
</dbReference>
<dbReference type="RefSeq" id="NP_001087076.1">
    <property type="nucleotide sequence ID" value="NM_001093607.1"/>
</dbReference>
<dbReference type="RefSeq" id="XP_018112294.1">
    <property type="nucleotide sequence ID" value="XM_018256805.1"/>
</dbReference>
<dbReference type="DNASU" id="446911"/>
<dbReference type="GeneID" id="446911"/>
<dbReference type="KEGG" id="xla:446911"/>
<dbReference type="AGR" id="Xenbase:XB-GENE-951308"/>
<dbReference type="CTD" id="446911"/>
<dbReference type="Xenbase" id="XB-GENE-951308">
    <property type="gene designation" value="dipk1a.L"/>
</dbReference>
<dbReference type="OMA" id="YMRIKYL"/>
<dbReference type="OrthoDB" id="8860232at2759"/>
<dbReference type="Proteomes" id="UP000186698">
    <property type="component" value="Chromosome 4L"/>
</dbReference>
<dbReference type="Bgee" id="446911">
    <property type="expression patterns" value="Expressed in muscle tissue and 19 other cell types or tissues"/>
</dbReference>
<dbReference type="GO" id="GO:0005789">
    <property type="term" value="C:endoplasmic reticulum membrane"/>
    <property type="evidence" value="ECO:0007669"/>
    <property type="project" value="UniProtKB-SubCell"/>
</dbReference>
<dbReference type="InterPro" id="IPR022049">
    <property type="entry name" value="FAM69_kinase_dom"/>
</dbReference>
<dbReference type="InterPro" id="IPR029244">
    <property type="entry name" value="FAM69_N"/>
</dbReference>
<dbReference type="PANTHER" id="PTHR21093:SF4">
    <property type="entry name" value="DIVERGENT PROTEIN KINASE DOMAIN 1A"/>
    <property type="match status" value="1"/>
</dbReference>
<dbReference type="PANTHER" id="PTHR21093">
    <property type="entry name" value="DIVERGENT PROTEIN KINASE DOMAIN 1C-RELATED"/>
    <property type="match status" value="1"/>
</dbReference>
<dbReference type="Pfam" id="PF12260">
    <property type="entry name" value="PIP49_C"/>
    <property type="match status" value="1"/>
</dbReference>
<dbReference type="Pfam" id="PF14875">
    <property type="entry name" value="PIP49_N"/>
    <property type="match status" value="1"/>
</dbReference>
<dbReference type="SMART" id="SM01299">
    <property type="entry name" value="PIP49_N"/>
    <property type="match status" value="1"/>
</dbReference>
<comment type="subcellular location">
    <subcellularLocation>
        <location evidence="2">Endoplasmic reticulum membrane</location>
        <topology evidence="2">Single-pass type II membrane protein</topology>
    </subcellularLocation>
</comment>
<comment type="PTM">
    <text evidence="1">Among the many cysteines in the lumenal domain, most are probably involved in disulfide bonds.</text>
</comment>
<comment type="similarity">
    <text evidence="4">Belongs to the DIPK family.</text>
</comment>
<keyword id="KW-1015">Disulfide bond</keyword>
<keyword id="KW-0256">Endoplasmic reticulum</keyword>
<keyword id="KW-0472">Membrane</keyword>
<keyword id="KW-1185">Reference proteome</keyword>
<keyword id="KW-0735">Signal-anchor</keyword>
<keyword id="KW-0812">Transmembrane</keyword>
<keyword id="KW-1133">Transmembrane helix</keyword>
<organism>
    <name type="scientific">Xenopus laevis</name>
    <name type="common">African clawed frog</name>
    <dbReference type="NCBI Taxonomy" id="8355"/>
    <lineage>
        <taxon>Eukaryota</taxon>
        <taxon>Metazoa</taxon>
        <taxon>Chordata</taxon>
        <taxon>Craniata</taxon>
        <taxon>Vertebrata</taxon>
        <taxon>Euteleostomi</taxon>
        <taxon>Amphibia</taxon>
        <taxon>Batrachia</taxon>
        <taxon>Anura</taxon>
        <taxon>Pipoidea</taxon>
        <taxon>Pipidae</taxon>
        <taxon>Xenopodinae</taxon>
        <taxon>Xenopus</taxon>
        <taxon>Xenopus</taxon>
    </lineage>
</organism>
<feature type="chain" id="PRO_0000282427" description="Divergent protein kinase domain 1A">
    <location>
        <begin position="1"/>
        <end position="410"/>
    </location>
</feature>
<feature type="topological domain" description="Cytoplasmic" evidence="3">
    <location>
        <begin position="1"/>
        <end position="5"/>
    </location>
</feature>
<feature type="transmembrane region" description="Helical" evidence="3">
    <location>
        <begin position="6"/>
        <end position="26"/>
    </location>
</feature>
<feature type="topological domain" description="Lumenal" evidence="3">
    <location>
        <begin position="27"/>
        <end position="410"/>
    </location>
</feature>
<gene>
    <name type="primary">dipk1a</name>
    <name type="synonym">fam69a</name>
</gene>
<protein>
    <recommendedName>
        <fullName evidence="4">Divergent protein kinase domain 1A</fullName>
    </recommendedName>
    <alternativeName>
        <fullName>Protein FAM69A</fullName>
    </alternativeName>
</protein>